<keyword id="KW-0028">Amino-acid biosynthesis</keyword>
<keyword id="KW-0413">Isomerase</keyword>
<keyword id="KW-0486">Methionine biosynthesis</keyword>
<keyword id="KW-1185">Reference proteome</keyword>
<proteinExistence type="inferred from homology"/>
<dbReference type="EC" id="5.3.1.23" evidence="1"/>
<dbReference type="EMBL" id="CP000471">
    <property type="protein sequence ID" value="ABK44452.1"/>
    <property type="molecule type" value="Genomic_DNA"/>
</dbReference>
<dbReference type="RefSeq" id="WP_011713596.1">
    <property type="nucleotide sequence ID" value="NC_008576.1"/>
</dbReference>
<dbReference type="SMR" id="A0L909"/>
<dbReference type="STRING" id="156889.Mmc1_1944"/>
<dbReference type="KEGG" id="mgm:Mmc1_1944"/>
<dbReference type="eggNOG" id="COG0182">
    <property type="taxonomic scope" value="Bacteria"/>
</dbReference>
<dbReference type="HOGENOM" id="CLU_016218_1_2_5"/>
<dbReference type="OrthoDB" id="9803436at2"/>
<dbReference type="UniPathway" id="UPA00904">
    <property type="reaction ID" value="UER00874"/>
</dbReference>
<dbReference type="Proteomes" id="UP000002586">
    <property type="component" value="Chromosome"/>
</dbReference>
<dbReference type="GO" id="GO:0046523">
    <property type="term" value="F:S-methyl-5-thioribose-1-phosphate isomerase activity"/>
    <property type="evidence" value="ECO:0007669"/>
    <property type="project" value="UniProtKB-UniRule"/>
</dbReference>
<dbReference type="GO" id="GO:0019509">
    <property type="term" value="P:L-methionine salvage from methylthioadenosine"/>
    <property type="evidence" value="ECO:0007669"/>
    <property type="project" value="UniProtKB-UniRule"/>
</dbReference>
<dbReference type="FunFam" id="1.20.120.420:FF:000003">
    <property type="entry name" value="Methylthioribose-1-phosphate isomerase"/>
    <property type="match status" value="1"/>
</dbReference>
<dbReference type="FunFam" id="3.40.50.10470:FF:000006">
    <property type="entry name" value="Methylthioribose-1-phosphate isomerase"/>
    <property type="match status" value="1"/>
</dbReference>
<dbReference type="Gene3D" id="1.20.120.420">
    <property type="entry name" value="translation initiation factor eif-2b, domain 1"/>
    <property type="match status" value="1"/>
</dbReference>
<dbReference type="Gene3D" id="3.40.50.10470">
    <property type="entry name" value="Translation initiation factor eif-2b, domain 2"/>
    <property type="match status" value="1"/>
</dbReference>
<dbReference type="HAMAP" id="MF_01678">
    <property type="entry name" value="Salvage_MtnA"/>
    <property type="match status" value="1"/>
</dbReference>
<dbReference type="InterPro" id="IPR000649">
    <property type="entry name" value="IF-2B-related"/>
</dbReference>
<dbReference type="InterPro" id="IPR005251">
    <property type="entry name" value="IF-M1Pi"/>
</dbReference>
<dbReference type="InterPro" id="IPR042529">
    <property type="entry name" value="IF_2B-like_C"/>
</dbReference>
<dbReference type="InterPro" id="IPR011559">
    <property type="entry name" value="Initiation_fac_2B_a/b/d"/>
</dbReference>
<dbReference type="InterPro" id="IPR027363">
    <property type="entry name" value="M1Pi_N"/>
</dbReference>
<dbReference type="InterPro" id="IPR037171">
    <property type="entry name" value="NagB/RpiA_transferase-like"/>
</dbReference>
<dbReference type="NCBIfam" id="TIGR00524">
    <property type="entry name" value="eIF-2B_rel"/>
    <property type="match status" value="1"/>
</dbReference>
<dbReference type="NCBIfam" id="NF004326">
    <property type="entry name" value="PRK05720.1"/>
    <property type="match status" value="1"/>
</dbReference>
<dbReference type="NCBIfam" id="TIGR00512">
    <property type="entry name" value="salvage_mtnA"/>
    <property type="match status" value="1"/>
</dbReference>
<dbReference type="PANTHER" id="PTHR43475">
    <property type="entry name" value="METHYLTHIORIBOSE-1-PHOSPHATE ISOMERASE"/>
    <property type="match status" value="1"/>
</dbReference>
<dbReference type="PANTHER" id="PTHR43475:SF1">
    <property type="entry name" value="METHYLTHIORIBOSE-1-PHOSPHATE ISOMERASE"/>
    <property type="match status" value="1"/>
</dbReference>
<dbReference type="Pfam" id="PF01008">
    <property type="entry name" value="IF-2B"/>
    <property type="match status" value="1"/>
</dbReference>
<dbReference type="SUPFAM" id="SSF100950">
    <property type="entry name" value="NagB/RpiA/CoA transferase-like"/>
    <property type="match status" value="1"/>
</dbReference>
<feature type="chain" id="PRO_0000357202" description="Methylthioribose-1-phosphate isomerase">
    <location>
        <begin position="1"/>
        <end position="352"/>
    </location>
</feature>
<feature type="active site" description="Proton donor" evidence="1">
    <location>
        <position position="243"/>
    </location>
</feature>
<feature type="binding site" evidence="1">
    <location>
        <begin position="49"/>
        <end position="51"/>
    </location>
    <ligand>
        <name>substrate</name>
    </ligand>
</feature>
<feature type="binding site" evidence="1">
    <location>
        <position position="93"/>
    </location>
    <ligand>
        <name>substrate</name>
    </ligand>
</feature>
<feature type="binding site" evidence="1">
    <location>
        <position position="202"/>
    </location>
    <ligand>
        <name>substrate</name>
    </ligand>
</feature>
<feature type="binding site" evidence="1">
    <location>
        <begin position="253"/>
        <end position="254"/>
    </location>
    <ligand>
        <name>substrate</name>
    </ligand>
</feature>
<feature type="site" description="Transition state stabilizer" evidence="1">
    <location>
        <position position="162"/>
    </location>
</feature>
<sequence>MSIFDVAVWDEAEHCARMLDQRRLPNEVVNLYYRSAAEMADGIRDMVVRGAPAIGCACAYGVAVEAKRLAKQGIPSHWPTAMAEGMATLRQSRPTAVNLTWALERMAPLLETTPPHEVPQRLLQEAHAIREEDIASCRAMGAHGAALLPTNSQRPTVIMTHCNAGALATAGYGTALGVIRAAHTAQQGNLRVIANETRPYLQGARLTAWELLQDHIDTTLITDNMAGWLMANGEVDAVVVGSDRVAANGDVANKIGTYTLAVLARRHDIPFFVAAPLSTVDLRCPTGREIPIEERSANEVTHCMGIRSAADGVKVRNPAFDVTPAELITAFICEKGVAKAPDQEKIAKLFQI</sequence>
<evidence type="ECO:0000255" key="1">
    <source>
        <dbReference type="HAMAP-Rule" id="MF_01678"/>
    </source>
</evidence>
<evidence type="ECO:0000305" key="2"/>
<comment type="function">
    <text evidence="1">Catalyzes the interconversion of methylthioribose-1-phosphate (MTR-1-P) into methylthioribulose-1-phosphate (MTRu-1-P).</text>
</comment>
<comment type="catalytic activity">
    <reaction evidence="1">
        <text>5-(methylsulfanyl)-alpha-D-ribose 1-phosphate = 5-(methylsulfanyl)-D-ribulose 1-phosphate</text>
        <dbReference type="Rhea" id="RHEA:19989"/>
        <dbReference type="ChEBI" id="CHEBI:58533"/>
        <dbReference type="ChEBI" id="CHEBI:58548"/>
        <dbReference type="EC" id="5.3.1.23"/>
    </reaction>
</comment>
<comment type="pathway">
    <text evidence="1">Amino-acid biosynthesis; L-methionine biosynthesis via salvage pathway; L-methionine from S-methyl-5-thio-alpha-D-ribose 1-phosphate: step 1/6.</text>
</comment>
<comment type="similarity">
    <text evidence="2">Belongs to the eIF-2B alpha/beta/delta subunits family. MtnA subfamily.</text>
</comment>
<name>MTNA_MAGMM</name>
<organism>
    <name type="scientific">Magnetococcus marinus (strain ATCC BAA-1437 / JCM 17883 / MC-1)</name>
    <dbReference type="NCBI Taxonomy" id="156889"/>
    <lineage>
        <taxon>Bacteria</taxon>
        <taxon>Pseudomonadati</taxon>
        <taxon>Pseudomonadota</taxon>
        <taxon>Alphaproteobacteria</taxon>
        <taxon>Magnetococcales</taxon>
        <taxon>Magnetococcaceae</taxon>
        <taxon>Magnetococcus</taxon>
    </lineage>
</organism>
<gene>
    <name evidence="1" type="primary">mtnA</name>
    <name type="ordered locus">Mmc1_1944</name>
</gene>
<accession>A0L909</accession>
<reference key="1">
    <citation type="journal article" date="2009" name="Appl. Environ. Microbiol.">
        <title>Complete genome sequence of the chemolithoautotrophic marine magnetotactic coccus strain MC-1.</title>
        <authorList>
            <person name="Schubbe S."/>
            <person name="Williams T.J."/>
            <person name="Xie G."/>
            <person name="Kiss H.E."/>
            <person name="Brettin T.S."/>
            <person name="Martinez D."/>
            <person name="Ross C.A."/>
            <person name="Schuler D."/>
            <person name="Cox B.L."/>
            <person name="Nealson K.H."/>
            <person name="Bazylinski D.A."/>
        </authorList>
    </citation>
    <scope>NUCLEOTIDE SEQUENCE [LARGE SCALE GENOMIC DNA]</scope>
    <source>
        <strain>ATCC BAA-1437 / JCM 17883 / MC-1</strain>
    </source>
</reference>
<protein>
    <recommendedName>
        <fullName evidence="1">Methylthioribose-1-phosphate isomerase</fullName>
        <shortName evidence="1">M1Pi</shortName>
        <shortName evidence="1">MTR-1-P isomerase</shortName>
        <ecNumber evidence="1">5.3.1.23</ecNumber>
    </recommendedName>
    <alternativeName>
        <fullName evidence="1">S-methyl-5-thioribose-1-phosphate isomerase</fullName>
    </alternativeName>
</protein>